<accession>B7HGR9</accession>
<name>Y1213_BACC4</name>
<protein>
    <recommendedName>
        <fullName evidence="1">Nucleotide-binding protein BCB4264_A1213</fullName>
    </recommendedName>
</protein>
<keyword id="KW-0547">Nucleotide-binding</keyword>
<organism>
    <name type="scientific">Bacillus cereus (strain B4264)</name>
    <dbReference type="NCBI Taxonomy" id="405532"/>
    <lineage>
        <taxon>Bacteria</taxon>
        <taxon>Bacillati</taxon>
        <taxon>Bacillota</taxon>
        <taxon>Bacilli</taxon>
        <taxon>Bacillales</taxon>
        <taxon>Bacillaceae</taxon>
        <taxon>Bacillus</taxon>
        <taxon>Bacillus cereus group</taxon>
    </lineage>
</organism>
<comment type="function">
    <text evidence="1">Nucleotide-binding protein.</text>
</comment>
<comment type="similarity">
    <text evidence="1">Belongs to the YajQ family.</text>
</comment>
<evidence type="ECO:0000255" key="1">
    <source>
        <dbReference type="HAMAP-Rule" id="MF_00632"/>
    </source>
</evidence>
<dbReference type="EMBL" id="CP001176">
    <property type="protein sequence ID" value="ACK62633.1"/>
    <property type="molecule type" value="Genomic_DNA"/>
</dbReference>
<dbReference type="RefSeq" id="WP_001040149.1">
    <property type="nucleotide sequence ID" value="NZ_VEHB01000003.1"/>
</dbReference>
<dbReference type="SMR" id="B7HGR9"/>
<dbReference type="KEGG" id="bcb:BCB4264_A1213"/>
<dbReference type="HOGENOM" id="CLU_099839_1_0_9"/>
<dbReference type="Proteomes" id="UP000007096">
    <property type="component" value="Chromosome"/>
</dbReference>
<dbReference type="GO" id="GO:0005829">
    <property type="term" value="C:cytosol"/>
    <property type="evidence" value="ECO:0007669"/>
    <property type="project" value="TreeGrafter"/>
</dbReference>
<dbReference type="GO" id="GO:0000166">
    <property type="term" value="F:nucleotide binding"/>
    <property type="evidence" value="ECO:0007669"/>
    <property type="project" value="TreeGrafter"/>
</dbReference>
<dbReference type="CDD" id="cd11740">
    <property type="entry name" value="YajQ_like"/>
    <property type="match status" value="1"/>
</dbReference>
<dbReference type="FunFam" id="3.30.70.990:FF:000002">
    <property type="entry name" value="UPF0234 protein LEP1GSC067_4943"/>
    <property type="match status" value="1"/>
</dbReference>
<dbReference type="FunFam" id="3.30.70.860:FF:000003">
    <property type="entry name" value="UPF0234 protein YBT020_06460"/>
    <property type="match status" value="1"/>
</dbReference>
<dbReference type="Gene3D" id="3.30.70.860">
    <property type="match status" value="1"/>
</dbReference>
<dbReference type="Gene3D" id="3.30.70.990">
    <property type="entry name" value="YajQ-like, domain 2"/>
    <property type="match status" value="1"/>
</dbReference>
<dbReference type="HAMAP" id="MF_00632">
    <property type="entry name" value="YajQ"/>
    <property type="match status" value="1"/>
</dbReference>
<dbReference type="InterPro" id="IPR007551">
    <property type="entry name" value="DUF520"/>
</dbReference>
<dbReference type="InterPro" id="IPR035571">
    <property type="entry name" value="UPF0234-like_C"/>
</dbReference>
<dbReference type="InterPro" id="IPR035570">
    <property type="entry name" value="UPF0234_N"/>
</dbReference>
<dbReference type="InterPro" id="IPR036183">
    <property type="entry name" value="YajQ-like_sf"/>
</dbReference>
<dbReference type="NCBIfam" id="NF003819">
    <property type="entry name" value="PRK05412.1"/>
    <property type="match status" value="1"/>
</dbReference>
<dbReference type="PANTHER" id="PTHR30476">
    <property type="entry name" value="UPF0234 PROTEIN YAJQ"/>
    <property type="match status" value="1"/>
</dbReference>
<dbReference type="PANTHER" id="PTHR30476:SF0">
    <property type="entry name" value="UPF0234 PROTEIN YAJQ"/>
    <property type="match status" value="1"/>
</dbReference>
<dbReference type="Pfam" id="PF04461">
    <property type="entry name" value="DUF520"/>
    <property type="match status" value="1"/>
</dbReference>
<dbReference type="SUPFAM" id="SSF89963">
    <property type="entry name" value="YajQ-like"/>
    <property type="match status" value="2"/>
</dbReference>
<gene>
    <name type="ordered locus">BCB4264_A1213</name>
</gene>
<proteinExistence type="inferred from homology"/>
<reference key="1">
    <citation type="submission" date="2008-10" db="EMBL/GenBank/DDBJ databases">
        <title>Genome sequence of Bacillus cereus B4264.</title>
        <authorList>
            <person name="Dodson R.J."/>
            <person name="Durkin A.S."/>
            <person name="Rosovitz M.J."/>
            <person name="Rasko D.A."/>
            <person name="Hoffmaster A."/>
            <person name="Ravel J."/>
            <person name="Sutton G."/>
        </authorList>
    </citation>
    <scope>NUCLEOTIDE SEQUENCE [LARGE SCALE GENOMIC DNA]</scope>
    <source>
        <strain>B4264</strain>
    </source>
</reference>
<feature type="chain" id="PRO_1000130600" description="Nucleotide-binding protein BCB4264_A1213">
    <location>
        <begin position="1"/>
        <end position="163"/>
    </location>
</feature>
<sequence>MAKDSSFDIVSKVELPEVTNAINIALKEIQNRYDFKGSKSDIKLEKEVLVLTSDDEFKLEQVKDVLISKLVKRNVPIKNLDYGKVEAATGNTVRQRATLQQGIDKDNAKKINNIIKEMKLKVKTQVQDDQVRVTAKSRDDLQAVIAAVRSADLPIDVQFINYR</sequence>